<proteinExistence type="inferred from homology"/>
<gene>
    <name evidence="1" type="primary">aroK</name>
    <name type="ordered locus">TTHA1385</name>
</gene>
<evidence type="ECO:0000255" key="1">
    <source>
        <dbReference type="HAMAP-Rule" id="MF_00109"/>
    </source>
</evidence>
<protein>
    <recommendedName>
        <fullName evidence="1">Shikimate kinase</fullName>
        <shortName evidence="1">SK</shortName>
        <ecNumber evidence="1">2.7.1.71</ecNumber>
    </recommendedName>
</protein>
<reference key="1">
    <citation type="submission" date="2004-11" db="EMBL/GenBank/DDBJ databases">
        <title>Complete genome sequence of Thermus thermophilus HB8.</title>
        <authorList>
            <person name="Masui R."/>
            <person name="Kurokawa K."/>
            <person name="Nakagawa N."/>
            <person name="Tokunaga F."/>
            <person name="Koyama Y."/>
            <person name="Shibata T."/>
            <person name="Oshima T."/>
            <person name="Yokoyama S."/>
            <person name="Yasunaga T."/>
            <person name="Kuramitsu S."/>
        </authorList>
    </citation>
    <scope>NUCLEOTIDE SEQUENCE [LARGE SCALE GENOMIC DNA]</scope>
    <source>
        <strain>ATCC 27634 / DSM 579 / HB8</strain>
    </source>
</reference>
<accession>Q5SII4</accession>
<organism>
    <name type="scientific">Thermus thermophilus (strain ATCC 27634 / DSM 579 / HB8)</name>
    <dbReference type="NCBI Taxonomy" id="300852"/>
    <lineage>
        <taxon>Bacteria</taxon>
        <taxon>Thermotogati</taxon>
        <taxon>Deinococcota</taxon>
        <taxon>Deinococci</taxon>
        <taxon>Thermales</taxon>
        <taxon>Thermaceae</taxon>
        <taxon>Thermus</taxon>
    </lineage>
</organism>
<feature type="chain" id="PRO_0000237953" description="Shikimate kinase">
    <location>
        <begin position="1"/>
        <end position="184"/>
    </location>
</feature>
<feature type="binding site" evidence="1">
    <location>
        <begin position="20"/>
        <end position="25"/>
    </location>
    <ligand>
        <name>ATP</name>
        <dbReference type="ChEBI" id="CHEBI:30616"/>
    </ligand>
</feature>
<feature type="binding site" evidence="1">
    <location>
        <position position="24"/>
    </location>
    <ligand>
        <name>Mg(2+)</name>
        <dbReference type="ChEBI" id="CHEBI:18420"/>
    </ligand>
</feature>
<feature type="binding site" evidence="1">
    <location>
        <position position="42"/>
    </location>
    <ligand>
        <name>substrate</name>
    </ligand>
</feature>
<feature type="binding site" evidence="1">
    <location>
        <position position="66"/>
    </location>
    <ligand>
        <name>substrate</name>
    </ligand>
</feature>
<feature type="binding site" evidence="1">
    <location>
        <position position="88"/>
    </location>
    <ligand>
        <name>substrate</name>
    </ligand>
</feature>
<feature type="binding site" evidence="1">
    <location>
        <position position="127"/>
    </location>
    <ligand>
        <name>ATP</name>
        <dbReference type="ChEBI" id="CHEBI:30616"/>
    </ligand>
</feature>
<feature type="binding site" evidence="1">
    <location>
        <position position="146"/>
    </location>
    <ligand>
        <name>substrate</name>
    </ligand>
</feature>
<feature type="binding site" evidence="1">
    <location>
        <position position="162"/>
    </location>
    <ligand>
        <name>ATP</name>
        <dbReference type="ChEBI" id="CHEBI:30616"/>
    </ligand>
</feature>
<sequence length="184" mass="20944">MARLEVPRPATFVTLTGFMGVGKSRIGRELARALMLHFIDLDRYIERRTGISIPDIFRHLGEEAFRRMEKEAVRELVGKDYLVLSLGGGTFMDPESQKALLGRGPVVALWASPETILERAMRKPGERPLLQVENPLERIRTLLEARAPVYRKAHIHVSTDGRRVEEVVEEIVEKLWRHAEARGA</sequence>
<name>AROK_THET8</name>
<comment type="function">
    <text evidence="1">Catalyzes the specific phosphorylation of the 3-hydroxyl group of shikimic acid using ATP as a cosubstrate.</text>
</comment>
<comment type="catalytic activity">
    <reaction evidence="1">
        <text>shikimate + ATP = 3-phosphoshikimate + ADP + H(+)</text>
        <dbReference type="Rhea" id="RHEA:13121"/>
        <dbReference type="ChEBI" id="CHEBI:15378"/>
        <dbReference type="ChEBI" id="CHEBI:30616"/>
        <dbReference type="ChEBI" id="CHEBI:36208"/>
        <dbReference type="ChEBI" id="CHEBI:145989"/>
        <dbReference type="ChEBI" id="CHEBI:456216"/>
        <dbReference type="EC" id="2.7.1.71"/>
    </reaction>
</comment>
<comment type="cofactor">
    <cofactor evidence="1">
        <name>Mg(2+)</name>
        <dbReference type="ChEBI" id="CHEBI:18420"/>
    </cofactor>
    <text evidence="1">Binds 1 Mg(2+) ion per subunit.</text>
</comment>
<comment type="pathway">
    <text evidence="1">Metabolic intermediate biosynthesis; chorismate biosynthesis; chorismate from D-erythrose 4-phosphate and phosphoenolpyruvate: step 5/7.</text>
</comment>
<comment type="subunit">
    <text evidence="1">Monomer.</text>
</comment>
<comment type="subcellular location">
    <subcellularLocation>
        <location evidence="1">Cytoplasm</location>
    </subcellularLocation>
</comment>
<comment type="similarity">
    <text evidence="1">Belongs to the shikimate kinase family.</text>
</comment>
<dbReference type="EC" id="2.7.1.71" evidence="1"/>
<dbReference type="EMBL" id="AP008226">
    <property type="protein sequence ID" value="BAD71208.1"/>
    <property type="molecule type" value="Genomic_DNA"/>
</dbReference>
<dbReference type="RefSeq" id="WP_008632876.1">
    <property type="nucleotide sequence ID" value="NC_006461.1"/>
</dbReference>
<dbReference type="RefSeq" id="YP_144651.1">
    <property type="nucleotide sequence ID" value="NC_006461.1"/>
</dbReference>
<dbReference type="SMR" id="Q5SII4"/>
<dbReference type="EnsemblBacteria" id="BAD71208">
    <property type="protein sequence ID" value="BAD71208"/>
    <property type="gene ID" value="BAD71208"/>
</dbReference>
<dbReference type="GeneID" id="3169123"/>
<dbReference type="KEGG" id="ttj:TTHA1385"/>
<dbReference type="PATRIC" id="fig|300852.9.peg.1361"/>
<dbReference type="eggNOG" id="COG0703">
    <property type="taxonomic scope" value="Bacteria"/>
</dbReference>
<dbReference type="HOGENOM" id="CLU_057607_2_1_0"/>
<dbReference type="PhylomeDB" id="Q5SII4"/>
<dbReference type="UniPathway" id="UPA00053">
    <property type="reaction ID" value="UER00088"/>
</dbReference>
<dbReference type="Proteomes" id="UP000000532">
    <property type="component" value="Chromosome"/>
</dbReference>
<dbReference type="GO" id="GO:0005829">
    <property type="term" value="C:cytosol"/>
    <property type="evidence" value="ECO:0007669"/>
    <property type="project" value="TreeGrafter"/>
</dbReference>
<dbReference type="GO" id="GO:0005524">
    <property type="term" value="F:ATP binding"/>
    <property type="evidence" value="ECO:0007669"/>
    <property type="project" value="UniProtKB-UniRule"/>
</dbReference>
<dbReference type="GO" id="GO:0000287">
    <property type="term" value="F:magnesium ion binding"/>
    <property type="evidence" value="ECO:0007669"/>
    <property type="project" value="UniProtKB-UniRule"/>
</dbReference>
<dbReference type="GO" id="GO:0004765">
    <property type="term" value="F:shikimate kinase activity"/>
    <property type="evidence" value="ECO:0007669"/>
    <property type="project" value="UniProtKB-UniRule"/>
</dbReference>
<dbReference type="GO" id="GO:0008652">
    <property type="term" value="P:amino acid biosynthetic process"/>
    <property type="evidence" value="ECO:0007669"/>
    <property type="project" value="UniProtKB-KW"/>
</dbReference>
<dbReference type="GO" id="GO:0009073">
    <property type="term" value="P:aromatic amino acid family biosynthetic process"/>
    <property type="evidence" value="ECO:0007669"/>
    <property type="project" value="UniProtKB-KW"/>
</dbReference>
<dbReference type="GO" id="GO:0009423">
    <property type="term" value="P:chorismate biosynthetic process"/>
    <property type="evidence" value="ECO:0007669"/>
    <property type="project" value="UniProtKB-UniRule"/>
</dbReference>
<dbReference type="CDD" id="cd00464">
    <property type="entry name" value="SK"/>
    <property type="match status" value="1"/>
</dbReference>
<dbReference type="Gene3D" id="3.40.50.300">
    <property type="entry name" value="P-loop containing nucleotide triphosphate hydrolases"/>
    <property type="match status" value="1"/>
</dbReference>
<dbReference type="HAMAP" id="MF_00109">
    <property type="entry name" value="Shikimate_kinase"/>
    <property type="match status" value="1"/>
</dbReference>
<dbReference type="InterPro" id="IPR027417">
    <property type="entry name" value="P-loop_NTPase"/>
</dbReference>
<dbReference type="InterPro" id="IPR031322">
    <property type="entry name" value="Shikimate/glucono_kinase"/>
</dbReference>
<dbReference type="InterPro" id="IPR000623">
    <property type="entry name" value="Shikimate_kinase/TSH1"/>
</dbReference>
<dbReference type="InterPro" id="IPR023000">
    <property type="entry name" value="Shikimate_kinase_CS"/>
</dbReference>
<dbReference type="NCBIfam" id="NF010554">
    <property type="entry name" value="PRK13948.1"/>
    <property type="match status" value="1"/>
</dbReference>
<dbReference type="PANTHER" id="PTHR21087">
    <property type="entry name" value="SHIKIMATE KINASE"/>
    <property type="match status" value="1"/>
</dbReference>
<dbReference type="PANTHER" id="PTHR21087:SF16">
    <property type="entry name" value="SHIKIMATE KINASE 1, CHLOROPLASTIC"/>
    <property type="match status" value="1"/>
</dbReference>
<dbReference type="Pfam" id="PF01202">
    <property type="entry name" value="SKI"/>
    <property type="match status" value="1"/>
</dbReference>
<dbReference type="PRINTS" id="PR01100">
    <property type="entry name" value="SHIKIMTKNASE"/>
</dbReference>
<dbReference type="SUPFAM" id="SSF52540">
    <property type="entry name" value="P-loop containing nucleoside triphosphate hydrolases"/>
    <property type="match status" value="1"/>
</dbReference>
<dbReference type="PROSITE" id="PS01128">
    <property type="entry name" value="SHIKIMATE_KINASE"/>
    <property type="match status" value="1"/>
</dbReference>
<keyword id="KW-0028">Amino-acid biosynthesis</keyword>
<keyword id="KW-0057">Aromatic amino acid biosynthesis</keyword>
<keyword id="KW-0067">ATP-binding</keyword>
<keyword id="KW-0963">Cytoplasm</keyword>
<keyword id="KW-0418">Kinase</keyword>
<keyword id="KW-0460">Magnesium</keyword>
<keyword id="KW-0479">Metal-binding</keyword>
<keyword id="KW-0547">Nucleotide-binding</keyword>
<keyword id="KW-1185">Reference proteome</keyword>
<keyword id="KW-0808">Transferase</keyword>